<feature type="chain" id="PRO_1000196125" description="Large ribosomal subunit protein bL34">
    <location>
        <begin position="1"/>
        <end position="44"/>
    </location>
</feature>
<feature type="region of interest" description="Disordered" evidence="2">
    <location>
        <begin position="1"/>
        <end position="44"/>
    </location>
</feature>
<gene>
    <name evidence="1" type="primary">rpmH</name>
    <name type="ordered locus">Spy49_0210</name>
</gene>
<keyword id="KW-0687">Ribonucleoprotein</keyword>
<keyword id="KW-0689">Ribosomal protein</keyword>
<evidence type="ECO:0000255" key="1">
    <source>
        <dbReference type="HAMAP-Rule" id="MF_00391"/>
    </source>
</evidence>
<evidence type="ECO:0000256" key="2">
    <source>
        <dbReference type="SAM" id="MobiDB-lite"/>
    </source>
</evidence>
<evidence type="ECO:0000305" key="3"/>
<organism>
    <name type="scientific">Streptococcus pyogenes serotype M49 (strain NZ131)</name>
    <dbReference type="NCBI Taxonomy" id="471876"/>
    <lineage>
        <taxon>Bacteria</taxon>
        <taxon>Bacillati</taxon>
        <taxon>Bacillota</taxon>
        <taxon>Bacilli</taxon>
        <taxon>Lactobacillales</taxon>
        <taxon>Streptococcaceae</taxon>
        <taxon>Streptococcus</taxon>
    </lineage>
</organism>
<accession>B5XJP0</accession>
<name>RL34_STRPZ</name>
<protein>
    <recommendedName>
        <fullName evidence="1">Large ribosomal subunit protein bL34</fullName>
    </recommendedName>
    <alternativeName>
        <fullName evidence="3">50S ribosomal protein L34</fullName>
    </alternativeName>
</protein>
<comment type="similarity">
    <text evidence="1">Belongs to the bacterial ribosomal protein bL34 family.</text>
</comment>
<sequence>MKRTYQPSKIRRQRKHGFRHRMSTKNGRRVLAARRRKGRKVLSA</sequence>
<proteinExistence type="inferred from homology"/>
<dbReference type="EMBL" id="CP000829">
    <property type="protein sequence ID" value="ACI60552.1"/>
    <property type="molecule type" value="Genomic_DNA"/>
</dbReference>
<dbReference type="SMR" id="B5XJP0"/>
<dbReference type="KEGG" id="soz:Spy49_0210"/>
<dbReference type="HOGENOM" id="CLU_129938_2_0_9"/>
<dbReference type="Proteomes" id="UP000001039">
    <property type="component" value="Chromosome"/>
</dbReference>
<dbReference type="GO" id="GO:1990904">
    <property type="term" value="C:ribonucleoprotein complex"/>
    <property type="evidence" value="ECO:0007669"/>
    <property type="project" value="UniProtKB-KW"/>
</dbReference>
<dbReference type="GO" id="GO:0005840">
    <property type="term" value="C:ribosome"/>
    <property type="evidence" value="ECO:0007669"/>
    <property type="project" value="UniProtKB-KW"/>
</dbReference>
<dbReference type="GO" id="GO:0003735">
    <property type="term" value="F:structural constituent of ribosome"/>
    <property type="evidence" value="ECO:0007669"/>
    <property type="project" value="InterPro"/>
</dbReference>
<dbReference type="GO" id="GO:0006412">
    <property type="term" value="P:translation"/>
    <property type="evidence" value="ECO:0007669"/>
    <property type="project" value="UniProtKB-UniRule"/>
</dbReference>
<dbReference type="FunFam" id="1.10.287.3980:FF:000001">
    <property type="entry name" value="Mitochondrial ribosomal protein L34"/>
    <property type="match status" value="1"/>
</dbReference>
<dbReference type="Gene3D" id="1.10.287.3980">
    <property type="match status" value="1"/>
</dbReference>
<dbReference type="HAMAP" id="MF_00391">
    <property type="entry name" value="Ribosomal_bL34"/>
    <property type="match status" value="1"/>
</dbReference>
<dbReference type="InterPro" id="IPR000271">
    <property type="entry name" value="Ribosomal_bL34"/>
</dbReference>
<dbReference type="InterPro" id="IPR020939">
    <property type="entry name" value="Ribosomal_bL34_CS"/>
</dbReference>
<dbReference type="NCBIfam" id="TIGR01030">
    <property type="entry name" value="rpmH_bact"/>
    <property type="match status" value="1"/>
</dbReference>
<dbReference type="PANTHER" id="PTHR14503:SF4">
    <property type="entry name" value="LARGE RIBOSOMAL SUBUNIT PROTEIN BL34M"/>
    <property type="match status" value="1"/>
</dbReference>
<dbReference type="PANTHER" id="PTHR14503">
    <property type="entry name" value="MITOCHONDRIAL RIBOSOMAL PROTEIN 34 FAMILY MEMBER"/>
    <property type="match status" value="1"/>
</dbReference>
<dbReference type="Pfam" id="PF00468">
    <property type="entry name" value="Ribosomal_L34"/>
    <property type="match status" value="1"/>
</dbReference>
<dbReference type="PROSITE" id="PS00784">
    <property type="entry name" value="RIBOSOMAL_L34"/>
    <property type="match status" value="1"/>
</dbReference>
<reference key="1">
    <citation type="journal article" date="2008" name="J. Bacteriol.">
        <title>Genome sequence of a nephritogenic and highly transformable M49 strain of Streptococcus pyogenes.</title>
        <authorList>
            <person name="McShan W.M."/>
            <person name="Ferretti J.J."/>
            <person name="Karasawa T."/>
            <person name="Suvorov A.N."/>
            <person name="Lin S."/>
            <person name="Qin B."/>
            <person name="Jia H."/>
            <person name="Kenton S."/>
            <person name="Najar F."/>
            <person name="Wu H."/>
            <person name="Scott J."/>
            <person name="Roe B.A."/>
            <person name="Savic D.J."/>
        </authorList>
    </citation>
    <scope>NUCLEOTIDE SEQUENCE [LARGE SCALE GENOMIC DNA]</scope>
    <source>
        <strain>NZ131</strain>
    </source>
</reference>